<gene>
    <name type="primary">hisS</name>
    <name type="ordered locus">AF_1642</name>
</gene>
<dbReference type="EC" id="6.1.1.21"/>
<dbReference type="EMBL" id="AE000782">
    <property type="protein sequence ID" value="AAB89600.1"/>
    <property type="molecule type" value="Genomic_DNA"/>
</dbReference>
<dbReference type="PIR" id="A69455">
    <property type="entry name" value="A69455"/>
</dbReference>
<dbReference type="RefSeq" id="WP_010879138.1">
    <property type="nucleotide sequence ID" value="NC_000917.1"/>
</dbReference>
<dbReference type="SMR" id="O28631"/>
<dbReference type="STRING" id="224325.AF_1642"/>
<dbReference type="PaxDb" id="224325-AF_1642"/>
<dbReference type="EnsemblBacteria" id="AAB89600">
    <property type="protein sequence ID" value="AAB89600"/>
    <property type="gene ID" value="AF_1642"/>
</dbReference>
<dbReference type="GeneID" id="24795386"/>
<dbReference type="KEGG" id="afu:AF_1642"/>
<dbReference type="eggNOG" id="arCOG00404">
    <property type="taxonomic scope" value="Archaea"/>
</dbReference>
<dbReference type="HOGENOM" id="CLU_025113_3_1_2"/>
<dbReference type="OrthoDB" id="8659at2157"/>
<dbReference type="PhylomeDB" id="O28631"/>
<dbReference type="BRENDA" id="6.1.1.21">
    <property type="organism ID" value="414"/>
</dbReference>
<dbReference type="Proteomes" id="UP000002199">
    <property type="component" value="Chromosome"/>
</dbReference>
<dbReference type="GO" id="GO:0005737">
    <property type="term" value="C:cytoplasm"/>
    <property type="evidence" value="ECO:0007669"/>
    <property type="project" value="UniProtKB-SubCell"/>
</dbReference>
<dbReference type="GO" id="GO:0005524">
    <property type="term" value="F:ATP binding"/>
    <property type="evidence" value="ECO:0007669"/>
    <property type="project" value="UniProtKB-UniRule"/>
</dbReference>
<dbReference type="GO" id="GO:0004821">
    <property type="term" value="F:histidine-tRNA ligase activity"/>
    <property type="evidence" value="ECO:0007669"/>
    <property type="project" value="UniProtKB-UniRule"/>
</dbReference>
<dbReference type="GO" id="GO:0006427">
    <property type="term" value="P:histidyl-tRNA aminoacylation"/>
    <property type="evidence" value="ECO:0007669"/>
    <property type="project" value="UniProtKB-UniRule"/>
</dbReference>
<dbReference type="GO" id="GO:0000105">
    <property type="term" value="P:L-histidine biosynthetic process"/>
    <property type="evidence" value="ECO:0007669"/>
    <property type="project" value="InterPro"/>
</dbReference>
<dbReference type="CDD" id="cd00773">
    <property type="entry name" value="HisRS-like_core"/>
    <property type="match status" value="1"/>
</dbReference>
<dbReference type="CDD" id="cd00859">
    <property type="entry name" value="HisRS_anticodon"/>
    <property type="match status" value="1"/>
</dbReference>
<dbReference type="Gene3D" id="3.40.50.800">
    <property type="entry name" value="Anticodon-binding domain"/>
    <property type="match status" value="1"/>
</dbReference>
<dbReference type="Gene3D" id="3.30.930.10">
    <property type="entry name" value="Bira Bifunctional Protein, Domain 2"/>
    <property type="match status" value="1"/>
</dbReference>
<dbReference type="HAMAP" id="MF_00127">
    <property type="entry name" value="His_tRNA_synth"/>
    <property type="match status" value="1"/>
</dbReference>
<dbReference type="HAMAP" id="MF_00125">
    <property type="entry name" value="HisZ"/>
    <property type="match status" value="1"/>
</dbReference>
<dbReference type="InterPro" id="IPR006195">
    <property type="entry name" value="aa-tRNA-synth_II"/>
</dbReference>
<dbReference type="InterPro" id="IPR045864">
    <property type="entry name" value="aa-tRNA-synth_II/BPL/LPL"/>
</dbReference>
<dbReference type="InterPro" id="IPR004154">
    <property type="entry name" value="Anticodon-bd"/>
</dbReference>
<dbReference type="InterPro" id="IPR036621">
    <property type="entry name" value="Anticodon-bd_dom_sf"/>
</dbReference>
<dbReference type="InterPro" id="IPR015807">
    <property type="entry name" value="His-tRNA-ligase"/>
</dbReference>
<dbReference type="InterPro" id="IPR041715">
    <property type="entry name" value="HisRS-like_core"/>
</dbReference>
<dbReference type="InterPro" id="IPR004516">
    <property type="entry name" value="HisRS/HisZ"/>
</dbReference>
<dbReference type="InterPro" id="IPR033656">
    <property type="entry name" value="HisRS_anticodon"/>
</dbReference>
<dbReference type="InterPro" id="IPR004517">
    <property type="entry name" value="HisZ"/>
</dbReference>
<dbReference type="NCBIfam" id="TIGR00442">
    <property type="entry name" value="hisS"/>
    <property type="match status" value="1"/>
</dbReference>
<dbReference type="NCBIfam" id="TIGR00443">
    <property type="entry name" value="hisZ_biosyn_reg"/>
    <property type="match status" value="1"/>
</dbReference>
<dbReference type="PANTHER" id="PTHR43707:SF1">
    <property type="entry name" value="HISTIDINE--TRNA LIGASE, MITOCHONDRIAL-RELATED"/>
    <property type="match status" value="1"/>
</dbReference>
<dbReference type="PANTHER" id="PTHR43707">
    <property type="entry name" value="HISTIDYL-TRNA SYNTHETASE"/>
    <property type="match status" value="1"/>
</dbReference>
<dbReference type="Pfam" id="PF03129">
    <property type="entry name" value="HGTP_anticodon"/>
    <property type="match status" value="1"/>
</dbReference>
<dbReference type="Pfam" id="PF13393">
    <property type="entry name" value="tRNA-synt_His"/>
    <property type="match status" value="1"/>
</dbReference>
<dbReference type="PIRSF" id="PIRSF001549">
    <property type="entry name" value="His-tRNA_synth"/>
    <property type="match status" value="1"/>
</dbReference>
<dbReference type="SUPFAM" id="SSF52954">
    <property type="entry name" value="Class II aaRS ABD-related"/>
    <property type="match status" value="1"/>
</dbReference>
<dbReference type="SUPFAM" id="SSF55681">
    <property type="entry name" value="Class II aaRS and biotin synthetases"/>
    <property type="match status" value="1"/>
</dbReference>
<dbReference type="PROSITE" id="PS50862">
    <property type="entry name" value="AA_TRNA_LIGASE_II"/>
    <property type="match status" value="1"/>
</dbReference>
<proteinExistence type="inferred from homology"/>
<feature type="chain" id="PRO_0000136308" description="Histidine--tRNA ligase">
    <location>
        <begin position="1"/>
        <end position="409"/>
    </location>
</feature>
<keyword id="KW-0030">Aminoacyl-tRNA synthetase</keyword>
<keyword id="KW-0067">ATP-binding</keyword>
<keyword id="KW-0963">Cytoplasm</keyword>
<keyword id="KW-0436">Ligase</keyword>
<keyword id="KW-0547">Nucleotide-binding</keyword>
<keyword id="KW-0648">Protein biosynthesis</keyword>
<keyword id="KW-1185">Reference proteome</keyword>
<protein>
    <recommendedName>
        <fullName>Histidine--tRNA ligase</fullName>
        <ecNumber>6.1.1.21</ecNumber>
    </recommendedName>
    <alternativeName>
        <fullName>Histidyl-tRNA synthetase</fullName>
        <shortName>HisRS</shortName>
    </alternativeName>
</protein>
<sequence length="409" mass="46217">MKIERPRGTRDFLPDEMERRREIEKRMRKIAESFGYREVATPTFEYLELFTRKSGEGIIEEMYVFKDKSGRDLALRPELTAPVMRMFVNECSVMPKPLRFYYFANCFRYERPQKGRYREFWQFGVELIGSESYLADAEVIILADKILKDVGVNFSLEIGHVGIMRHLLKPIGEDRASKVMRLIDKGDREGLESYLAEIRVNEDLRDKIFSLLELKGDESVIEEAKEIIDYDFGHLESLSALLRDVGVDFTLNLGIARGLDYYTGVVFECYAEGLGAQKQVCGGGSYELSSLFGGPVTPSTGFAIGFDRVCEACSVEAGEKSVVAVVSFKGLESQAFRVASMLRERGFTAVVDVMGRNLKKQMSFASEMGVKYAVILGPDEVKSGRVAIKNLETQEQVVVAEEELFSILQ</sequence>
<organism>
    <name type="scientific">Archaeoglobus fulgidus (strain ATCC 49558 / DSM 4304 / JCM 9628 / NBRC 100126 / VC-16)</name>
    <dbReference type="NCBI Taxonomy" id="224325"/>
    <lineage>
        <taxon>Archaea</taxon>
        <taxon>Methanobacteriati</taxon>
        <taxon>Methanobacteriota</taxon>
        <taxon>Archaeoglobi</taxon>
        <taxon>Archaeoglobales</taxon>
        <taxon>Archaeoglobaceae</taxon>
        <taxon>Archaeoglobus</taxon>
    </lineage>
</organism>
<evidence type="ECO:0000250" key="1"/>
<evidence type="ECO:0000305" key="2"/>
<accession>O28631</accession>
<name>SYH_ARCFU</name>
<reference key="1">
    <citation type="journal article" date="1997" name="Nature">
        <title>The complete genome sequence of the hyperthermophilic, sulphate-reducing archaeon Archaeoglobus fulgidus.</title>
        <authorList>
            <person name="Klenk H.-P."/>
            <person name="Clayton R.A."/>
            <person name="Tomb J.-F."/>
            <person name="White O."/>
            <person name="Nelson K.E."/>
            <person name="Ketchum K.A."/>
            <person name="Dodson R.J."/>
            <person name="Gwinn M.L."/>
            <person name="Hickey E.K."/>
            <person name="Peterson J.D."/>
            <person name="Richardson D.L."/>
            <person name="Kerlavage A.R."/>
            <person name="Graham D.E."/>
            <person name="Kyrpides N.C."/>
            <person name="Fleischmann R.D."/>
            <person name="Quackenbush J."/>
            <person name="Lee N.H."/>
            <person name="Sutton G.G."/>
            <person name="Gill S.R."/>
            <person name="Kirkness E.F."/>
            <person name="Dougherty B.A."/>
            <person name="McKenney K."/>
            <person name="Adams M.D."/>
            <person name="Loftus B.J."/>
            <person name="Peterson S.N."/>
            <person name="Reich C.I."/>
            <person name="McNeil L.K."/>
            <person name="Badger J.H."/>
            <person name="Glodek A."/>
            <person name="Zhou L."/>
            <person name="Overbeek R."/>
            <person name="Gocayne J.D."/>
            <person name="Weidman J.F."/>
            <person name="McDonald L.A."/>
            <person name="Utterback T.R."/>
            <person name="Cotton M.D."/>
            <person name="Spriggs T."/>
            <person name="Artiach P."/>
            <person name="Kaine B.P."/>
            <person name="Sykes S.M."/>
            <person name="Sadow P.W."/>
            <person name="D'Andrea K.P."/>
            <person name="Bowman C."/>
            <person name="Fujii C."/>
            <person name="Garland S.A."/>
            <person name="Mason T.M."/>
            <person name="Olsen G.J."/>
            <person name="Fraser C.M."/>
            <person name="Smith H.O."/>
            <person name="Woese C.R."/>
            <person name="Venter J.C."/>
        </authorList>
    </citation>
    <scope>NUCLEOTIDE SEQUENCE [LARGE SCALE GENOMIC DNA]</scope>
    <source>
        <strain>ATCC 49558 / DSM 4304 / JCM 9628 / NBRC 100126 / VC-16</strain>
    </source>
</reference>
<comment type="catalytic activity">
    <reaction>
        <text>tRNA(His) + L-histidine + ATP = L-histidyl-tRNA(His) + AMP + diphosphate + H(+)</text>
        <dbReference type="Rhea" id="RHEA:17313"/>
        <dbReference type="Rhea" id="RHEA-COMP:9665"/>
        <dbReference type="Rhea" id="RHEA-COMP:9689"/>
        <dbReference type="ChEBI" id="CHEBI:15378"/>
        <dbReference type="ChEBI" id="CHEBI:30616"/>
        <dbReference type="ChEBI" id="CHEBI:33019"/>
        <dbReference type="ChEBI" id="CHEBI:57595"/>
        <dbReference type="ChEBI" id="CHEBI:78442"/>
        <dbReference type="ChEBI" id="CHEBI:78527"/>
        <dbReference type="ChEBI" id="CHEBI:456215"/>
        <dbReference type="EC" id="6.1.1.21"/>
    </reaction>
</comment>
<comment type="subcellular location">
    <subcellularLocation>
        <location evidence="1">Cytoplasm</location>
    </subcellularLocation>
</comment>
<comment type="similarity">
    <text evidence="2">Belongs to the class-II aminoacyl-tRNA synthetase family.</text>
</comment>